<dbReference type="EMBL" id="U55001">
    <property type="protein sequence ID" value="AAB05437.1"/>
    <property type="molecule type" value="Genomic_DNA"/>
</dbReference>
<dbReference type="SMR" id="Q65949"/>
<dbReference type="GO" id="GO:0042025">
    <property type="term" value="C:host cell nucleus"/>
    <property type="evidence" value="ECO:0007669"/>
    <property type="project" value="UniProtKB-SubCell"/>
</dbReference>
<dbReference type="GO" id="GO:0098021">
    <property type="term" value="C:viral capsid, decoration"/>
    <property type="evidence" value="ECO:0007669"/>
    <property type="project" value="UniProtKB-UniRule"/>
</dbReference>
<dbReference type="Gene3D" id="1.20.120.1500">
    <property type="entry name" value="Pre-hexon-linking protein IIIa"/>
    <property type="match status" value="1"/>
</dbReference>
<dbReference type="HAMAP" id="MF_04047">
    <property type="entry name" value="ADV_CAP3"/>
    <property type="match status" value="1"/>
</dbReference>
<dbReference type="InterPro" id="IPR003479">
    <property type="entry name" value="Hex_IIIa"/>
</dbReference>
<dbReference type="InterPro" id="IPR043053">
    <property type="entry name" value="Hex_IIIa_N"/>
</dbReference>
<dbReference type="Pfam" id="PF02455">
    <property type="entry name" value="Hex_IIIa"/>
    <property type="match status" value="1"/>
</dbReference>
<accession>Q65949</accession>
<organismHost>
    <name type="scientific">Canis lupus familiaris</name>
    <name type="common">Dog</name>
    <name type="synonym">Canis familiaris</name>
    <dbReference type="NCBI Taxonomy" id="9615"/>
</organismHost>
<evidence type="ECO:0000250" key="1">
    <source>
        <dbReference type="UniProtKB" id="P03279"/>
    </source>
</evidence>
<evidence type="ECO:0000250" key="2">
    <source>
        <dbReference type="UniProtKB" id="P12537"/>
    </source>
</evidence>
<evidence type="ECO:0000255" key="3">
    <source>
        <dbReference type="HAMAP-Rule" id="MF_04047"/>
    </source>
</evidence>
<evidence type="ECO:0000256" key="4">
    <source>
        <dbReference type="SAM" id="MobiDB-lite"/>
    </source>
</evidence>
<evidence type="ECO:0000305" key="5"/>
<proteinExistence type="inferred from homology"/>
<organism>
    <name type="scientific">Canine adenovirus serotype 1 (strain CLL)</name>
    <name type="common">CAdV-1</name>
    <name type="synonym">Canine adenovirus 1 (strain CLL)</name>
    <dbReference type="NCBI Taxonomy" id="69150"/>
    <lineage>
        <taxon>Viruses</taxon>
        <taxon>Varidnaviria</taxon>
        <taxon>Bamfordvirae</taxon>
        <taxon>Preplasmiviricota</taxon>
        <taxon>Tectiliviricetes</taxon>
        <taxon>Rowavirales</taxon>
        <taxon>Adenoviridae</taxon>
        <taxon>Mastadenovirus</taxon>
        <taxon>Canine mastadenovirus A</taxon>
    </lineage>
</organism>
<sequence>MRKRRTLTAPSHFNSMSAALNPMKMAAMQSQPTVDDSWAASISRIMSLTAGDRHKFSSQPFANRLDAILEAVVPSRKDPTHEKVLTIVNALIENGAIRRDEGAGVYDALLHRVSKYNSINTQSNLERLAGDVREAVAQQVRIAAGNLGSLTALNSFLARLPANVERGQDNYTGFLSALKLLVSEVPNTEVYQSGPHYFLQSSRNGTQTVNLTNAFENLKPLWGVKAPTMERLSISALLTPNTRLLLLLVSPFTDSVSISRDSYLGYLLTLYREALGRNHLDERTLEEVTEVSKAMGNENINNLQATLNFLLTNRQKKIPKDYSLTPEEERIVRFIQQAVSLRMMQENLSPTEALDVTAANMEPSFYANNRDFINKLMDYFHRAAAIAPDYFLGAVMNPRWLPPEGFFTGVFDFPERDNYIWDGPDSSLDLTRQDAMRFLEEKFIDDDQRTESRSVSRVPTPASSRRSSVAMASDSLIRPMNNDKNSLREIEVLADKLARWKTYKRESEEARESLPVVVRPKKYSSAISSDESDDGMSKPDKFLKFEGSGNPFAHLRPKLGRCL</sequence>
<feature type="chain" id="PRO_0000221837" description="Pre-hexon-linking protein IIIa" evidence="3">
    <location>
        <begin position="1"/>
        <end position="563"/>
    </location>
</feature>
<feature type="chain" id="PRO_0000421390" description="Hexon-linking protein IIIa" evidence="3">
    <location>
        <begin position="1"/>
        <end position="548"/>
    </location>
</feature>
<feature type="propeptide" id="PRO_0000421389" evidence="1 3">
    <location>
        <begin position="549"/>
        <end position="563"/>
    </location>
</feature>
<feature type="region of interest" description="Peripentonal hexon-tethering domain" evidence="3">
    <location>
        <begin position="1"/>
        <end position="117"/>
    </location>
</feature>
<feature type="region of interest" description="Binding to hexon-linking protein" evidence="3">
    <location>
        <begin position="148"/>
        <end position="261"/>
    </location>
</feature>
<feature type="region of interest" description="Disordered" evidence="4">
    <location>
        <begin position="449"/>
        <end position="472"/>
    </location>
</feature>
<feature type="region of interest" description="Disordered" evidence="4">
    <location>
        <begin position="522"/>
        <end position="543"/>
    </location>
</feature>
<feature type="compositionally biased region" description="Low complexity" evidence="4">
    <location>
        <begin position="462"/>
        <end position="472"/>
    </location>
</feature>
<feature type="site" description="Cleavage; by viral protease" evidence="1 3">
    <location>
        <begin position="548"/>
        <end position="549"/>
    </location>
</feature>
<feature type="modified residue" description="Phosphoserine; by host" evidence="3">
    <location>
        <position position="235"/>
    </location>
</feature>
<feature type="modified residue" description="Phosphothreonine; by host" evidence="3">
    <location>
        <position position="284"/>
    </location>
</feature>
<feature type="modified residue" description="Phosphoserine; by host" evidence="3">
    <location>
        <position position="452"/>
    </location>
</feature>
<feature type="modified residue" description="Phosphoserine; by host" evidence="3">
    <location>
        <position position="456"/>
    </location>
</feature>
<feature type="modified residue" description="Phosphoserine; by host" evidence="3">
    <location>
        <position position="475"/>
    </location>
</feature>
<feature type="modified residue" description="Phosphoserine; by host" evidence="3">
    <location>
        <position position="486"/>
    </location>
</feature>
<name>CAP3_ADECC</name>
<keyword id="KW-1232">Capsid decoration protein</keyword>
<keyword id="KW-0167">Capsid protein</keyword>
<keyword id="KW-1048">Host nucleus</keyword>
<keyword id="KW-0426">Late protein</keyword>
<keyword id="KW-0597">Phosphoprotein</keyword>
<keyword id="KW-0231">Viral genome packaging</keyword>
<keyword id="KW-1188">Viral release from host cell</keyword>
<keyword id="KW-0946">Virion</keyword>
<gene>
    <name type="ORF">L1</name>
</gene>
<reference key="1">
    <citation type="submission" date="1996-08" db="EMBL/GenBank/DDBJ databases">
        <title>DNA sequence and genomic organization of canine adenovirus type 1.</title>
        <authorList>
            <person name="Campbell J.B."/>
            <person name="Zhao Y."/>
        </authorList>
    </citation>
    <scope>NUCLEOTIDE SEQUENCE [LARGE SCALE GENOMIC DNA]</scope>
</reference>
<protein>
    <recommendedName>
        <fullName evidence="3">Pre-hexon-linking protein IIIa</fullName>
    </recommendedName>
    <alternativeName>
        <fullName evidence="3">Capsid vertex-specific component IIIa</fullName>
        <shortName evidence="3">CVSC</shortName>
    </alternativeName>
    <alternativeName>
        <fullName evidence="3">Protein IIIa</fullName>
    </alternativeName>
    <alternativeName>
        <fullName evidence="3">pIIIa</fullName>
    </alternativeName>
    <component>
        <recommendedName>
            <fullName evidence="3">Hexon-linking protein IIIa</fullName>
        </recommendedName>
    </component>
</protein>
<comment type="function">
    <text evidence="3">Structural component of the virion that acts as a cement protein on the capsid exterior which mediates the interactions between the hexons, including the peripentonal hexons, and reaches all the way to the penton vertices. Two hexon linking proteins IIIa, one from each facet, stabilize the unique edge interface between a pair of facets. As the virus enters the host cell, hexon linking proteins IIIa are shed concomitant with virion acidification in the endosome. During virus assembly, seems to play a role in the serotype specificity of the packaging of viral DNA via its interaction with packaging protein 3.</text>
</comment>
<comment type="subunit">
    <text evidence="2 3">Interacts with hexon proteins; this interaction tethers the peripentonal hexons to hexons situated in the facet. Interacts with the penton protein (via N-terminus). Interacts with packaging protein 3; this interaction is required to promote correct genome packaging.</text>
</comment>
<comment type="subcellular location">
    <subcellularLocation>
        <location evidence="3">Virion</location>
    </subcellularLocation>
    <subcellularLocation>
        <location evidence="3">Host nucleus</location>
    </subcellularLocation>
    <text evidence="3">Surrounds the border of each facet on the capsid exterior. Present in around 60 copies per virion.</text>
</comment>
<comment type="induction">
    <text evidence="3">Expressed in the late phase of the viral replicative cycle.</text>
</comment>
<comment type="PTM">
    <text evidence="1 3">Cleaved near the C-terminus by the viral protease during virion maturation to form the mature protein.</text>
</comment>
<comment type="miscellaneous">
    <text evidence="3">All late proteins expressed from the major late promoter are produced by alternative splicing and alternative polyadenylation of the same gene giving rise to non-overlapping ORFs. A leader sequence is present in the N-terminus of all these mRNAs and is recognized by the viral shutoff protein to provide expression although conventional translation via ribosome scanning from the cap has been shut off in the host cell.</text>
</comment>
<comment type="similarity">
    <text evidence="3 5">Belongs to the adenoviridae hexon-linking protein IIIa family.</text>
</comment>